<dbReference type="EMBL" id="CP000390">
    <property type="protein sequence ID" value="ABG62852.1"/>
    <property type="molecule type" value="Genomic_DNA"/>
</dbReference>
<dbReference type="SMR" id="Q11IC3"/>
<dbReference type="STRING" id="266779.Meso_1456"/>
<dbReference type="KEGG" id="mes:Meso_1456"/>
<dbReference type="eggNOG" id="COG1489">
    <property type="taxonomic scope" value="Bacteria"/>
</dbReference>
<dbReference type="HOGENOM" id="CLU_052299_2_0_5"/>
<dbReference type="OrthoDB" id="9802365at2"/>
<dbReference type="GO" id="GO:0003677">
    <property type="term" value="F:DNA binding"/>
    <property type="evidence" value="ECO:0007669"/>
    <property type="project" value="InterPro"/>
</dbReference>
<dbReference type="CDD" id="cd22359">
    <property type="entry name" value="SfsA-like_bacterial"/>
    <property type="match status" value="1"/>
</dbReference>
<dbReference type="Gene3D" id="2.40.50.580">
    <property type="match status" value="1"/>
</dbReference>
<dbReference type="Gene3D" id="3.40.1350.60">
    <property type="match status" value="1"/>
</dbReference>
<dbReference type="HAMAP" id="MF_00095">
    <property type="entry name" value="SfsA"/>
    <property type="match status" value="1"/>
</dbReference>
<dbReference type="InterPro" id="IPR005224">
    <property type="entry name" value="SfsA"/>
</dbReference>
<dbReference type="InterPro" id="IPR040452">
    <property type="entry name" value="SfsA_C"/>
</dbReference>
<dbReference type="InterPro" id="IPR041465">
    <property type="entry name" value="SfsA_N"/>
</dbReference>
<dbReference type="NCBIfam" id="TIGR00230">
    <property type="entry name" value="sfsA"/>
    <property type="match status" value="1"/>
</dbReference>
<dbReference type="PANTHER" id="PTHR30545">
    <property type="entry name" value="SUGAR FERMENTATION STIMULATION PROTEIN A"/>
    <property type="match status" value="1"/>
</dbReference>
<dbReference type="PANTHER" id="PTHR30545:SF2">
    <property type="entry name" value="SUGAR FERMENTATION STIMULATION PROTEIN A"/>
    <property type="match status" value="1"/>
</dbReference>
<dbReference type="Pfam" id="PF03749">
    <property type="entry name" value="SfsA"/>
    <property type="match status" value="1"/>
</dbReference>
<dbReference type="Pfam" id="PF17746">
    <property type="entry name" value="SfsA_N"/>
    <property type="match status" value="1"/>
</dbReference>
<name>SFSA_CHESB</name>
<gene>
    <name evidence="1" type="primary">sfsA</name>
    <name type="ordered locus">Meso_1456</name>
</gene>
<accession>Q11IC3</accession>
<feature type="chain" id="PRO_1000007997" description="Sugar fermentation stimulation protein homolog">
    <location>
        <begin position="1"/>
        <end position="233"/>
    </location>
</feature>
<protein>
    <recommendedName>
        <fullName evidence="1">Sugar fermentation stimulation protein homolog</fullName>
    </recommendedName>
</protein>
<organism>
    <name type="scientific">Chelativorans sp. (strain BNC1)</name>
    <dbReference type="NCBI Taxonomy" id="266779"/>
    <lineage>
        <taxon>Bacteria</taxon>
        <taxon>Pseudomonadati</taxon>
        <taxon>Pseudomonadota</taxon>
        <taxon>Alphaproteobacteria</taxon>
        <taxon>Hyphomicrobiales</taxon>
        <taxon>Phyllobacteriaceae</taxon>
        <taxon>Chelativorans</taxon>
    </lineage>
</organism>
<sequence>MIFPSPLTEARLIRRYKRFLADVVLADGTELTVSVPNTGSMLGLTAPGSRVLLSKWDDPKRKYPYRLEIVEADGTLVGINTGLPNRLAAEAIRARLVGDLGTYPVIRPEQRYGERSRIDFLLEHPERPPAYVEVKNVHFMREAGLAEFPDTRTDRGARHLDELAAMRRAGNRAVMIYVVQRADCSRFRLCADLDASYAAAFGRARDAGVEAFVIGCQISADAIAPDRLIDLDF</sequence>
<comment type="similarity">
    <text evidence="1">Belongs to the SfsA family.</text>
</comment>
<evidence type="ECO:0000255" key="1">
    <source>
        <dbReference type="HAMAP-Rule" id="MF_00095"/>
    </source>
</evidence>
<proteinExistence type="inferred from homology"/>
<reference key="1">
    <citation type="submission" date="2006-06" db="EMBL/GenBank/DDBJ databases">
        <title>Complete sequence of chromosome of Mesorhizobium sp. BNC1.</title>
        <authorList>
            <consortium name="US DOE Joint Genome Institute"/>
            <person name="Copeland A."/>
            <person name="Lucas S."/>
            <person name="Lapidus A."/>
            <person name="Barry K."/>
            <person name="Detter J.C."/>
            <person name="Glavina del Rio T."/>
            <person name="Hammon N."/>
            <person name="Israni S."/>
            <person name="Dalin E."/>
            <person name="Tice H."/>
            <person name="Pitluck S."/>
            <person name="Chertkov O."/>
            <person name="Brettin T."/>
            <person name="Bruce D."/>
            <person name="Han C."/>
            <person name="Tapia R."/>
            <person name="Gilna P."/>
            <person name="Schmutz J."/>
            <person name="Larimer F."/>
            <person name="Land M."/>
            <person name="Hauser L."/>
            <person name="Kyrpides N."/>
            <person name="Mikhailova N."/>
            <person name="Richardson P."/>
        </authorList>
    </citation>
    <scope>NUCLEOTIDE SEQUENCE [LARGE SCALE GENOMIC DNA]</scope>
    <source>
        <strain>BNC1</strain>
    </source>
</reference>